<name>RPOB_HAHCH</name>
<comment type="function">
    <text evidence="1">DNA-dependent RNA polymerase catalyzes the transcription of DNA into RNA using the four ribonucleoside triphosphates as substrates.</text>
</comment>
<comment type="catalytic activity">
    <reaction evidence="1">
        <text>RNA(n) + a ribonucleoside 5'-triphosphate = RNA(n+1) + diphosphate</text>
        <dbReference type="Rhea" id="RHEA:21248"/>
        <dbReference type="Rhea" id="RHEA-COMP:14527"/>
        <dbReference type="Rhea" id="RHEA-COMP:17342"/>
        <dbReference type="ChEBI" id="CHEBI:33019"/>
        <dbReference type="ChEBI" id="CHEBI:61557"/>
        <dbReference type="ChEBI" id="CHEBI:140395"/>
        <dbReference type="EC" id="2.7.7.6"/>
    </reaction>
</comment>
<comment type="subunit">
    <text evidence="1">The RNAP catalytic core consists of 2 alpha, 1 beta, 1 beta' and 1 omega subunit. When a sigma factor is associated with the core the holoenzyme is formed, which can initiate transcription.</text>
</comment>
<comment type="similarity">
    <text evidence="1">Belongs to the RNA polymerase beta chain family.</text>
</comment>
<accession>Q2S905</accession>
<reference key="1">
    <citation type="journal article" date="2005" name="Nucleic Acids Res.">
        <title>Genomic blueprint of Hahella chejuensis, a marine microbe producing an algicidal agent.</title>
        <authorList>
            <person name="Jeong H."/>
            <person name="Yim J.H."/>
            <person name="Lee C."/>
            <person name="Choi S.-H."/>
            <person name="Park Y.K."/>
            <person name="Yoon S.H."/>
            <person name="Hur C.-G."/>
            <person name="Kang H.-Y."/>
            <person name="Kim D."/>
            <person name="Lee H.H."/>
            <person name="Park K.H."/>
            <person name="Park S.-H."/>
            <person name="Park H.-S."/>
            <person name="Lee H.K."/>
            <person name="Oh T.K."/>
            <person name="Kim J.F."/>
        </authorList>
    </citation>
    <scope>NUCLEOTIDE SEQUENCE [LARGE SCALE GENOMIC DNA]</scope>
    <source>
        <strain>KCTC 2396</strain>
    </source>
</reference>
<proteinExistence type="inferred from homology"/>
<protein>
    <recommendedName>
        <fullName evidence="1">DNA-directed RNA polymerase subunit beta</fullName>
        <shortName evidence="1">RNAP subunit beta</shortName>
        <ecNumber evidence="1">2.7.7.6</ecNumber>
    </recommendedName>
    <alternativeName>
        <fullName evidence="1">RNA polymerase subunit beta</fullName>
    </alternativeName>
    <alternativeName>
        <fullName evidence="1">Transcriptase subunit beta</fullName>
    </alternativeName>
</protein>
<keyword id="KW-0240">DNA-directed RNA polymerase</keyword>
<keyword id="KW-0548">Nucleotidyltransferase</keyword>
<keyword id="KW-1185">Reference proteome</keyword>
<keyword id="KW-0804">Transcription</keyword>
<keyword id="KW-0808">Transferase</keyword>
<dbReference type="EC" id="2.7.7.6" evidence="1"/>
<dbReference type="EMBL" id="CP000155">
    <property type="protein sequence ID" value="ABC32869.1"/>
    <property type="molecule type" value="Genomic_DNA"/>
</dbReference>
<dbReference type="RefSeq" id="WP_011399927.1">
    <property type="nucleotide sequence ID" value="NC_007645.1"/>
</dbReference>
<dbReference type="SMR" id="Q2S905"/>
<dbReference type="STRING" id="349521.HCH_06224"/>
<dbReference type="KEGG" id="hch:HCH_06224"/>
<dbReference type="eggNOG" id="COG0085">
    <property type="taxonomic scope" value="Bacteria"/>
</dbReference>
<dbReference type="HOGENOM" id="CLU_000524_4_3_6"/>
<dbReference type="OrthoDB" id="9803954at2"/>
<dbReference type="Proteomes" id="UP000000238">
    <property type="component" value="Chromosome"/>
</dbReference>
<dbReference type="GO" id="GO:0000428">
    <property type="term" value="C:DNA-directed RNA polymerase complex"/>
    <property type="evidence" value="ECO:0007669"/>
    <property type="project" value="UniProtKB-KW"/>
</dbReference>
<dbReference type="GO" id="GO:0003677">
    <property type="term" value="F:DNA binding"/>
    <property type="evidence" value="ECO:0007669"/>
    <property type="project" value="UniProtKB-UniRule"/>
</dbReference>
<dbReference type="GO" id="GO:0003899">
    <property type="term" value="F:DNA-directed RNA polymerase activity"/>
    <property type="evidence" value="ECO:0007669"/>
    <property type="project" value="UniProtKB-UniRule"/>
</dbReference>
<dbReference type="GO" id="GO:0032549">
    <property type="term" value="F:ribonucleoside binding"/>
    <property type="evidence" value="ECO:0007669"/>
    <property type="project" value="InterPro"/>
</dbReference>
<dbReference type="GO" id="GO:0006351">
    <property type="term" value="P:DNA-templated transcription"/>
    <property type="evidence" value="ECO:0007669"/>
    <property type="project" value="UniProtKB-UniRule"/>
</dbReference>
<dbReference type="CDD" id="cd00653">
    <property type="entry name" value="RNA_pol_B_RPB2"/>
    <property type="match status" value="1"/>
</dbReference>
<dbReference type="FunFam" id="2.40.270.10:FF:000003">
    <property type="entry name" value="DNA-directed RNA polymerase subunit beta"/>
    <property type="match status" value="1"/>
</dbReference>
<dbReference type="FunFam" id="2.40.50.100:FF:000006">
    <property type="entry name" value="DNA-directed RNA polymerase subunit beta"/>
    <property type="match status" value="1"/>
</dbReference>
<dbReference type="FunFam" id="2.40.50.150:FF:000001">
    <property type="entry name" value="DNA-directed RNA polymerase subunit beta"/>
    <property type="match status" value="1"/>
</dbReference>
<dbReference type="FunFam" id="3.90.1100.10:FF:000002">
    <property type="entry name" value="DNA-directed RNA polymerase subunit beta"/>
    <property type="match status" value="1"/>
</dbReference>
<dbReference type="FunFam" id="3.90.1110.10:FF:000001">
    <property type="entry name" value="DNA-directed RNA polymerase subunit beta"/>
    <property type="match status" value="1"/>
</dbReference>
<dbReference type="FunFam" id="3.90.1110.10:FF:000004">
    <property type="entry name" value="DNA-directed RNA polymerase subunit beta"/>
    <property type="match status" value="1"/>
</dbReference>
<dbReference type="FunFam" id="3.90.1800.10:FF:000001">
    <property type="entry name" value="DNA-directed RNA polymerase subunit beta"/>
    <property type="match status" value="1"/>
</dbReference>
<dbReference type="Gene3D" id="2.40.50.100">
    <property type="match status" value="1"/>
</dbReference>
<dbReference type="Gene3D" id="2.40.50.150">
    <property type="match status" value="1"/>
</dbReference>
<dbReference type="Gene3D" id="3.90.1100.10">
    <property type="match status" value="2"/>
</dbReference>
<dbReference type="Gene3D" id="2.30.150.10">
    <property type="entry name" value="DNA-directed RNA polymerase, beta subunit, external 1 domain"/>
    <property type="match status" value="1"/>
</dbReference>
<dbReference type="Gene3D" id="2.40.270.10">
    <property type="entry name" value="DNA-directed RNA polymerase, subunit 2, domain 6"/>
    <property type="match status" value="1"/>
</dbReference>
<dbReference type="Gene3D" id="3.90.1800.10">
    <property type="entry name" value="RNA polymerase alpha subunit dimerisation domain"/>
    <property type="match status" value="1"/>
</dbReference>
<dbReference type="Gene3D" id="3.90.1110.10">
    <property type="entry name" value="RNA polymerase Rpb2, domain 2"/>
    <property type="match status" value="1"/>
</dbReference>
<dbReference type="HAMAP" id="MF_01321">
    <property type="entry name" value="RNApol_bact_RpoB"/>
    <property type="match status" value="1"/>
</dbReference>
<dbReference type="InterPro" id="IPR042107">
    <property type="entry name" value="DNA-dir_RNA_pol_bsu_ext_1_sf"/>
</dbReference>
<dbReference type="InterPro" id="IPR019462">
    <property type="entry name" value="DNA-dir_RNA_pol_bsu_external_1"/>
</dbReference>
<dbReference type="InterPro" id="IPR015712">
    <property type="entry name" value="DNA-dir_RNA_pol_su2"/>
</dbReference>
<dbReference type="InterPro" id="IPR007120">
    <property type="entry name" value="DNA-dir_RNAP_su2_dom"/>
</dbReference>
<dbReference type="InterPro" id="IPR037033">
    <property type="entry name" value="DNA-dir_RNAP_su2_hyb_sf"/>
</dbReference>
<dbReference type="InterPro" id="IPR010243">
    <property type="entry name" value="RNA_pol_bsu_bac"/>
</dbReference>
<dbReference type="InterPro" id="IPR007121">
    <property type="entry name" value="RNA_pol_bsu_CS"/>
</dbReference>
<dbReference type="InterPro" id="IPR007644">
    <property type="entry name" value="RNA_pol_bsu_protrusion"/>
</dbReference>
<dbReference type="InterPro" id="IPR007642">
    <property type="entry name" value="RNA_pol_Rpb2_2"/>
</dbReference>
<dbReference type="InterPro" id="IPR037034">
    <property type="entry name" value="RNA_pol_Rpb2_2_sf"/>
</dbReference>
<dbReference type="InterPro" id="IPR007645">
    <property type="entry name" value="RNA_pol_Rpb2_3"/>
</dbReference>
<dbReference type="InterPro" id="IPR007641">
    <property type="entry name" value="RNA_pol_Rpb2_7"/>
</dbReference>
<dbReference type="InterPro" id="IPR014724">
    <property type="entry name" value="RNA_pol_RPB2_OB-fold"/>
</dbReference>
<dbReference type="NCBIfam" id="NF001616">
    <property type="entry name" value="PRK00405.1"/>
    <property type="match status" value="1"/>
</dbReference>
<dbReference type="NCBIfam" id="TIGR02013">
    <property type="entry name" value="rpoB"/>
    <property type="match status" value="1"/>
</dbReference>
<dbReference type="PANTHER" id="PTHR20856">
    <property type="entry name" value="DNA-DIRECTED RNA POLYMERASE I SUBUNIT 2"/>
    <property type="match status" value="1"/>
</dbReference>
<dbReference type="Pfam" id="PF04563">
    <property type="entry name" value="RNA_pol_Rpb2_1"/>
    <property type="match status" value="1"/>
</dbReference>
<dbReference type="Pfam" id="PF04561">
    <property type="entry name" value="RNA_pol_Rpb2_2"/>
    <property type="match status" value="2"/>
</dbReference>
<dbReference type="Pfam" id="PF04565">
    <property type="entry name" value="RNA_pol_Rpb2_3"/>
    <property type="match status" value="1"/>
</dbReference>
<dbReference type="Pfam" id="PF10385">
    <property type="entry name" value="RNA_pol_Rpb2_45"/>
    <property type="match status" value="1"/>
</dbReference>
<dbReference type="Pfam" id="PF00562">
    <property type="entry name" value="RNA_pol_Rpb2_6"/>
    <property type="match status" value="1"/>
</dbReference>
<dbReference type="Pfam" id="PF04560">
    <property type="entry name" value="RNA_pol_Rpb2_7"/>
    <property type="match status" value="1"/>
</dbReference>
<dbReference type="SUPFAM" id="SSF64484">
    <property type="entry name" value="beta and beta-prime subunits of DNA dependent RNA-polymerase"/>
    <property type="match status" value="1"/>
</dbReference>
<dbReference type="PROSITE" id="PS01166">
    <property type="entry name" value="RNA_POL_BETA"/>
    <property type="match status" value="1"/>
</dbReference>
<organism>
    <name type="scientific">Hahella chejuensis (strain KCTC 2396)</name>
    <dbReference type="NCBI Taxonomy" id="349521"/>
    <lineage>
        <taxon>Bacteria</taxon>
        <taxon>Pseudomonadati</taxon>
        <taxon>Pseudomonadota</taxon>
        <taxon>Gammaproteobacteria</taxon>
        <taxon>Oceanospirillales</taxon>
        <taxon>Hahellaceae</taxon>
        <taxon>Hahella</taxon>
    </lineage>
</organism>
<gene>
    <name evidence="1" type="primary">rpoB</name>
    <name type="ordered locus">HCH_06224</name>
</gene>
<sequence>MTYSYTEKKRIRKDFGKLPAVMDVPYLLSIQLDSYHDFLQQDVAIEDRQEVGLHAAFKSVFPIVSFSGNAALEYVSYRLGQPVFDVAECQLRGVTYAAPLRVKVRLIIYDKESSTKAIKDIKEQEVYMGEVPLMTENGTFVINGTERVIVSQLHRSPGVFFDHDKGKTHSSGKLLYSARIIPYRGSWLDFEFDPKDCVFVRIDRRRKLPATILLRALGYAADEMLEMFFENSLFEVEGGEYFLDLVPSRLRGDIAIFEIKDDEGNLIVEEGRRVTARHIRQMEKAGLKRLRVPSSYLLGKVTATNIADPSTGEVIVECNTEITDDAIEKIEKAGIKRIETLYTNDLDCGPFVSDTLRIDATRSQLEALVEIYRMMRPGEPPTKESAENLFNNLFFSEERYDLSAVGRMKFNRRLGREETEGLGVLSHSDIIDVLRTLIDIRNGKGVVDDIDHLGNRRVRSVGEMAENQFRVGLVRVERAVKERLSMAESEGLMPQDLINAKPVAAAVKEFFGSSQLSQFMDQNNPLSEVTHKRRVSALGPGGLTRERAGFEVRDVHPTHYGRVCPIETPEGPNIGLINSLATYARTNTYGFLESPYRKVVDGLVTDDIEYLSAIEESDYVIAQASAAVDENGRLIDELVTVRHKNEFTVMPPEKVTLMDVSPRQVVSVAASLIPFLEHDDANRALMGSNMQRQAVPTLKAEKPLVGTGMERYVAQDSGVCVVARRGGVVVSVDAARIVVRVSDDETEAGDAGVDIYNLTKYQRSNQNTCINQRSLVMEGDEVARGDVLADGPSVDLGELALGQNMRIAFMPWNGYNFEDSILVSERVVQEDRFTTIHIQELTCVARDTKLGPEEVTADIPNVGESALAKLDDSGIIYIGAEVEPGDILVGKVTPKGETQLTPEEKLLRAIFGEKASDVKDTSLRVSTGMRGTVIDVQVFTRDGVEKDQRAKEIEQTELNKFRKDLNDEYKIVEGATFERLRSALLGQSVIGGPGLKKGDTLTEVHFNAFEKEEWFKLNMADEQLNELLEKAEGQLQERRKSIEDRYEDKKRKLQSGDDLAPGVLKIVKVYVAVKRRIQPGDKMAGRHGNKGVISAIKPVEDMPYDEQGNPVDIVLNPLGVPSRMNVGQVLETHLGAAAKGLGDKINRMLAEQKQAAEIRKFLHEIYNGIGGRNEDLDSLSDSEVLVLAANLKKGVPMATPVFDGAKEKEIKEMLRLADMDDSGQVWLYDGRTGERFERQVTVGYMYMLKLNHLVDDKMHARSTGSYSLVTQQPLGGKAQFGGQRFGEMEVWALEAYGAAYTLQEMLTVKSDDVNGRTKMYKNIVDGDHRMEPGMPESFNVLVKEIRSLGIDIELEAN</sequence>
<evidence type="ECO:0000255" key="1">
    <source>
        <dbReference type="HAMAP-Rule" id="MF_01321"/>
    </source>
</evidence>
<feature type="chain" id="PRO_0000237302" description="DNA-directed RNA polymerase subunit beta">
    <location>
        <begin position="1"/>
        <end position="1357"/>
    </location>
</feature>